<protein>
    <recommendedName>
        <fullName evidence="1">Chorismate synthase</fullName>
        <shortName evidence="1">CS</shortName>
        <ecNumber evidence="1">4.2.3.5</ecNumber>
    </recommendedName>
    <alternativeName>
        <fullName evidence="1">5-enolpyruvylshikimate-3-phosphate phospholyase</fullName>
    </alternativeName>
</protein>
<feature type="chain" id="PRO_0000140624" description="Chorismate synthase">
    <location>
        <begin position="1"/>
        <end position="361"/>
    </location>
</feature>
<feature type="binding site" evidence="1">
    <location>
        <position position="48"/>
    </location>
    <ligand>
        <name>NADP(+)</name>
        <dbReference type="ChEBI" id="CHEBI:58349"/>
    </ligand>
</feature>
<feature type="binding site" evidence="1">
    <location>
        <position position="54"/>
    </location>
    <ligand>
        <name>NADP(+)</name>
        <dbReference type="ChEBI" id="CHEBI:58349"/>
    </ligand>
</feature>
<feature type="binding site" evidence="1">
    <location>
        <begin position="125"/>
        <end position="127"/>
    </location>
    <ligand>
        <name>FMN</name>
        <dbReference type="ChEBI" id="CHEBI:58210"/>
    </ligand>
</feature>
<feature type="binding site" evidence="1">
    <location>
        <begin position="238"/>
        <end position="239"/>
    </location>
    <ligand>
        <name>FMN</name>
        <dbReference type="ChEBI" id="CHEBI:58210"/>
    </ligand>
</feature>
<feature type="binding site" evidence="1">
    <location>
        <position position="278"/>
    </location>
    <ligand>
        <name>FMN</name>
        <dbReference type="ChEBI" id="CHEBI:58210"/>
    </ligand>
</feature>
<feature type="binding site" evidence="1">
    <location>
        <begin position="293"/>
        <end position="297"/>
    </location>
    <ligand>
        <name>FMN</name>
        <dbReference type="ChEBI" id="CHEBI:58210"/>
    </ligand>
</feature>
<feature type="binding site" evidence="1">
    <location>
        <position position="319"/>
    </location>
    <ligand>
        <name>FMN</name>
        <dbReference type="ChEBI" id="CHEBI:58210"/>
    </ligand>
</feature>
<name>AROC_PHOLL</name>
<keyword id="KW-0028">Amino-acid biosynthesis</keyword>
<keyword id="KW-0057">Aromatic amino acid biosynthesis</keyword>
<keyword id="KW-0274">FAD</keyword>
<keyword id="KW-0285">Flavoprotein</keyword>
<keyword id="KW-0288">FMN</keyword>
<keyword id="KW-0456">Lyase</keyword>
<keyword id="KW-0521">NADP</keyword>
<keyword id="KW-1185">Reference proteome</keyword>
<sequence>MAGNSIGQFFRVTTFGESHGLALGCIVDGVPPGIAITEADLQVDLDRRRPGTSRYTTQRREPDQVRILSGVFEGVTTGTSIGLLIENTDQRSQDYSAIKDVFRPGHADYTYEQKYGIRDYRGGGRSSARETAMRVAAGAIAKKYLLDKYGIRVRACLTQMGNIHCQLKDWELVEQNPFFSPDETKLEQLDALMRELKKAGDSIGAKVTVVAENVPAGLGEPVFDRLDADIAHALMSINAVKGVEIGDGFGVINLRGSENRDEITARGFTSNHAGGILGGISSSQPIVAHIALKPTSSIMVPGKTINRQGEEVEMVTRGRHDPCVGIRAVPIAEAMMAIVLMDHLLRQRAQCADVESSLPRW</sequence>
<comment type="function">
    <text evidence="1">Catalyzes the anti-1,4-elimination of the C-3 phosphate and the C-6 proR hydrogen from 5-enolpyruvylshikimate-3-phosphate (EPSP) to yield chorismate, which is the branch point compound that serves as the starting substrate for the three terminal pathways of aromatic amino acid biosynthesis. This reaction introduces a second double bond into the aromatic ring system.</text>
</comment>
<comment type="catalytic activity">
    <reaction evidence="1">
        <text>5-O-(1-carboxyvinyl)-3-phosphoshikimate = chorismate + phosphate</text>
        <dbReference type="Rhea" id="RHEA:21020"/>
        <dbReference type="ChEBI" id="CHEBI:29748"/>
        <dbReference type="ChEBI" id="CHEBI:43474"/>
        <dbReference type="ChEBI" id="CHEBI:57701"/>
        <dbReference type="EC" id="4.2.3.5"/>
    </reaction>
</comment>
<comment type="cofactor">
    <cofactor evidence="1">
        <name>FMNH2</name>
        <dbReference type="ChEBI" id="CHEBI:57618"/>
    </cofactor>
    <text evidence="1">Reduced FMN (FMNH(2)).</text>
</comment>
<comment type="pathway">
    <text evidence="1">Metabolic intermediate biosynthesis; chorismate biosynthesis; chorismate from D-erythrose 4-phosphate and phosphoenolpyruvate: step 7/7.</text>
</comment>
<comment type="subunit">
    <text evidence="1">Homotetramer.</text>
</comment>
<comment type="similarity">
    <text evidence="1">Belongs to the chorismate synthase family.</text>
</comment>
<evidence type="ECO:0000255" key="1">
    <source>
        <dbReference type="HAMAP-Rule" id="MF_00300"/>
    </source>
</evidence>
<gene>
    <name evidence="1" type="primary">aroC</name>
    <name type="ordered locus">plu3189</name>
</gene>
<organism>
    <name type="scientific">Photorhabdus laumondii subsp. laumondii (strain DSM 15139 / CIP 105565 / TT01)</name>
    <name type="common">Photorhabdus luminescens subsp. laumondii</name>
    <dbReference type="NCBI Taxonomy" id="243265"/>
    <lineage>
        <taxon>Bacteria</taxon>
        <taxon>Pseudomonadati</taxon>
        <taxon>Pseudomonadota</taxon>
        <taxon>Gammaproteobacteria</taxon>
        <taxon>Enterobacterales</taxon>
        <taxon>Morganellaceae</taxon>
        <taxon>Photorhabdus</taxon>
    </lineage>
</organism>
<reference key="1">
    <citation type="journal article" date="2003" name="Nat. Biotechnol.">
        <title>The genome sequence of the entomopathogenic bacterium Photorhabdus luminescens.</title>
        <authorList>
            <person name="Duchaud E."/>
            <person name="Rusniok C."/>
            <person name="Frangeul L."/>
            <person name="Buchrieser C."/>
            <person name="Givaudan A."/>
            <person name="Taourit S."/>
            <person name="Bocs S."/>
            <person name="Boursaux-Eude C."/>
            <person name="Chandler M."/>
            <person name="Charles J.-F."/>
            <person name="Dassa E."/>
            <person name="Derose R."/>
            <person name="Derzelle S."/>
            <person name="Freyssinet G."/>
            <person name="Gaudriault S."/>
            <person name="Medigue C."/>
            <person name="Lanois A."/>
            <person name="Powell K."/>
            <person name="Siguier P."/>
            <person name="Vincent R."/>
            <person name="Wingate V."/>
            <person name="Zouine M."/>
            <person name="Glaser P."/>
            <person name="Boemare N."/>
            <person name="Danchin A."/>
            <person name="Kunst F."/>
        </authorList>
    </citation>
    <scope>NUCLEOTIDE SEQUENCE [LARGE SCALE GENOMIC DNA]</scope>
    <source>
        <strain>DSM 15139 / CIP 105565 / TT01</strain>
    </source>
</reference>
<proteinExistence type="inferred from homology"/>
<accession>Q7N299</accession>
<dbReference type="EC" id="4.2.3.5" evidence="1"/>
<dbReference type="EMBL" id="BX571869">
    <property type="protein sequence ID" value="CAE15563.1"/>
    <property type="molecule type" value="Genomic_DNA"/>
</dbReference>
<dbReference type="RefSeq" id="WP_011147396.1">
    <property type="nucleotide sequence ID" value="NC_005126.1"/>
</dbReference>
<dbReference type="SMR" id="Q7N299"/>
<dbReference type="STRING" id="243265.plu3189"/>
<dbReference type="GeneID" id="48849449"/>
<dbReference type="KEGG" id="plu:plu3189"/>
<dbReference type="eggNOG" id="COG0082">
    <property type="taxonomic scope" value="Bacteria"/>
</dbReference>
<dbReference type="HOGENOM" id="CLU_034547_0_2_6"/>
<dbReference type="OrthoDB" id="9771806at2"/>
<dbReference type="UniPathway" id="UPA00053">
    <property type="reaction ID" value="UER00090"/>
</dbReference>
<dbReference type="Proteomes" id="UP000002514">
    <property type="component" value="Chromosome"/>
</dbReference>
<dbReference type="GO" id="GO:0005829">
    <property type="term" value="C:cytosol"/>
    <property type="evidence" value="ECO:0007669"/>
    <property type="project" value="TreeGrafter"/>
</dbReference>
<dbReference type="GO" id="GO:0004107">
    <property type="term" value="F:chorismate synthase activity"/>
    <property type="evidence" value="ECO:0007669"/>
    <property type="project" value="UniProtKB-UniRule"/>
</dbReference>
<dbReference type="GO" id="GO:0010181">
    <property type="term" value="F:FMN binding"/>
    <property type="evidence" value="ECO:0007669"/>
    <property type="project" value="TreeGrafter"/>
</dbReference>
<dbReference type="GO" id="GO:0008652">
    <property type="term" value="P:amino acid biosynthetic process"/>
    <property type="evidence" value="ECO:0007669"/>
    <property type="project" value="UniProtKB-KW"/>
</dbReference>
<dbReference type="GO" id="GO:0009073">
    <property type="term" value="P:aromatic amino acid family biosynthetic process"/>
    <property type="evidence" value="ECO:0007669"/>
    <property type="project" value="UniProtKB-KW"/>
</dbReference>
<dbReference type="GO" id="GO:0009423">
    <property type="term" value="P:chorismate biosynthetic process"/>
    <property type="evidence" value="ECO:0007669"/>
    <property type="project" value="UniProtKB-UniRule"/>
</dbReference>
<dbReference type="CDD" id="cd07304">
    <property type="entry name" value="Chorismate_synthase"/>
    <property type="match status" value="1"/>
</dbReference>
<dbReference type="FunFam" id="3.60.150.10:FF:000001">
    <property type="entry name" value="Chorismate synthase"/>
    <property type="match status" value="1"/>
</dbReference>
<dbReference type="Gene3D" id="3.60.150.10">
    <property type="entry name" value="Chorismate synthase AroC"/>
    <property type="match status" value="1"/>
</dbReference>
<dbReference type="HAMAP" id="MF_00300">
    <property type="entry name" value="Chorismate_synth"/>
    <property type="match status" value="1"/>
</dbReference>
<dbReference type="InterPro" id="IPR000453">
    <property type="entry name" value="Chorismate_synth"/>
</dbReference>
<dbReference type="InterPro" id="IPR035904">
    <property type="entry name" value="Chorismate_synth_AroC_sf"/>
</dbReference>
<dbReference type="InterPro" id="IPR020541">
    <property type="entry name" value="Chorismate_synthase_CS"/>
</dbReference>
<dbReference type="NCBIfam" id="TIGR00033">
    <property type="entry name" value="aroC"/>
    <property type="match status" value="1"/>
</dbReference>
<dbReference type="NCBIfam" id="NF003793">
    <property type="entry name" value="PRK05382.1"/>
    <property type="match status" value="1"/>
</dbReference>
<dbReference type="PANTHER" id="PTHR21085">
    <property type="entry name" value="CHORISMATE SYNTHASE"/>
    <property type="match status" value="1"/>
</dbReference>
<dbReference type="PANTHER" id="PTHR21085:SF0">
    <property type="entry name" value="CHORISMATE SYNTHASE"/>
    <property type="match status" value="1"/>
</dbReference>
<dbReference type="Pfam" id="PF01264">
    <property type="entry name" value="Chorismate_synt"/>
    <property type="match status" value="1"/>
</dbReference>
<dbReference type="PIRSF" id="PIRSF001456">
    <property type="entry name" value="Chorismate_synth"/>
    <property type="match status" value="1"/>
</dbReference>
<dbReference type="SUPFAM" id="SSF103263">
    <property type="entry name" value="Chorismate synthase, AroC"/>
    <property type="match status" value="1"/>
</dbReference>
<dbReference type="PROSITE" id="PS00787">
    <property type="entry name" value="CHORISMATE_SYNTHASE_1"/>
    <property type="match status" value="1"/>
</dbReference>
<dbReference type="PROSITE" id="PS00788">
    <property type="entry name" value="CHORISMATE_SYNTHASE_2"/>
    <property type="match status" value="1"/>
</dbReference>
<dbReference type="PROSITE" id="PS00789">
    <property type="entry name" value="CHORISMATE_SYNTHASE_3"/>
    <property type="match status" value="1"/>
</dbReference>